<name>RL17_CERS4</name>
<reference key="1">
    <citation type="submission" date="2005-09" db="EMBL/GenBank/DDBJ databases">
        <title>Complete sequence of chromosome 1 of Rhodobacter sphaeroides 2.4.1.</title>
        <authorList>
            <person name="Copeland A."/>
            <person name="Lucas S."/>
            <person name="Lapidus A."/>
            <person name="Barry K."/>
            <person name="Detter J.C."/>
            <person name="Glavina T."/>
            <person name="Hammon N."/>
            <person name="Israni S."/>
            <person name="Pitluck S."/>
            <person name="Richardson P."/>
            <person name="Mackenzie C."/>
            <person name="Choudhary M."/>
            <person name="Larimer F."/>
            <person name="Hauser L.J."/>
            <person name="Land M."/>
            <person name="Donohue T.J."/>
            <person name="Kaplan S."/>
        </authorList>
    </citation>
    <scope>NUCLEOTIDE SEQUENCE [LARGE SCALE GENOMIC DNA]</scope>
    <source>
        <strain>ATCC 17023 / DSM 158 / JCM 6121 / CCUG 31486 / LMG 2827 / NBRC 12203 / NCIMB 8253 / ATH 2.4.1.</strain>
    </source>
</reference>
<comment type="subunit">
    <text evidence="1">Part of the 50S ribosomal subunit. Contacts protein L32.</text>
</comment>
<comment type="similarity">
    <text evidence="1">Belongs to the bacterial ribosomal protein bL17 family.</text>
</comment>
<keyword id="KW-1185">Reference proteome</keyword>
<keyword id="KW-0687">Ribonucleoprotein</keyword>
<keyword id="KW-0689">Ribosomal protein</keyword>
<evidence type="ECO:0000255" key="1">
    <source>
        <dbReference type="HAMAP-Rule" id="MF_01368"/>
    </source>
</evidence>
<evidence type="ECO:0000305" key="2"/>
<sequence>MRHARGYRRLNRTHEHRKALFANMAGSLIEHEQIKTTLPKAKELRPIIEKLITLAKRGDLHARRQAAAQLKEDRHVARLFEILGPRYAERAGGYVRVLKAGFRYGDMAPMAIIEFVDRDPNAKGAADKARTAAEEALEE</sequence>
<proteinExistence type="inferred from homology"/>
<feature type="chain" id="PRO_0000267926" description="Large ribosomal subunit protein bL17">
    <location>
        <begin position="1"/>
        <end position="139"/>
    </location>
</feature>
<gene>
    <name evidence="1" type="primary">rplQ</name>
    <name type="ordered locus">RHOS4_03190</name>
    <name type="ORF">RSP_1740</name>
</gene>
<dbReference type="EMBL" id="CP000143">
    <property type="protein sequence ID" value="ABA77887.1"/>
    <property type="molecule type" value="Genomic_DNA"/>
</dbReference>
<dbReference type="RefSeq" id="WP_002722538.1">
    <property type="nucleotide sequence ID" value="NZ_CP030271.1"/>
</dbReference>
<dbReference type="RefSeq" id="YP_351788.1">
    <property type="nucleotide sequence ID" value="NC_007493.2"/>
</dbReference>
<dbReference type="SMR" id="Q3J5P7"/>
<dbReference type="STRING" id="272943.RSP_1740"/>
<dbReference type="EnsemblBacteria" id="ABA77887">
    <property type="protein sequence ID" value="ABA77887"/>
    <property type="gene ID" value="RSP_1740"/>
</dbReference>
<dbReference type="GeneID" id="67445525"/>
<dbReference type="KEGG" id="rsp:RSP_1740"/>
<dbReference type="PATRIC" id="fig|272943.9.peg.618"/>
<dbReference type="eggNOG" id="COG0203">
    <property type="taxonomic scope" value="Bacteria"/>
</dbReference>
<dbReference type="OrthoDB" id="9809073at2"/>
<dbReference type="PhylomeDB" id="Q3J5P7"/>
<dbReference type="Proteomes" id="UP000002703">
    <property type="component" value="Chromosome 1"/>
</dbReference>
<dbReference type="GO" id="GO:0022625">
    <property type="term" value="C:cytosolic large ribosomal subunit"/>
    <property type="evidence" value="ECO:0007669"/>
    <property type="project" value="TreeGrafter"/>
</dbReference>
<dbReference type="GO" id="GO:0003735">
    <property type="term" value="F:structural constituent of ribosome"/>
    <property type="evidence" value="ECO:0007669"/>
    <property type="project" value="InterPro"/>
</dbReference>
<dbReference type="GO" id="GO:0006412">
    <property type="term" value="P:translation"/>
    <property type="evidence" value="ECO:0007669"/>
    <property type="project" value="UniProtKB-UniRule"/>
</dbReference>
<dbReference type="FunFam" id="3.90.1030.10:FF:000001">
    <property type="entry name" value="50S ribosomal protein L17"/>
    <property type="match status" value="1"/>
</dbReference>
<dbReference type="Gene3D" id="3.90.1030.10">
    <property type="entry name" value="Ribosomal protein L17"/>
    <property type="match status" value="1"/>
</dbReference>
<dbReference type="HAMAP" id="MF_01368">
    <property type="entry name" value="Ribosomal_bL17"/>
    <property type="match status" value="1"/>
</dbReference>
<dbReference type="InterPro" id="IPR000456">
    <property type="entry name" value="Ribosomal_bL17"/>
</dbReference>
<dbReference type="InterPro" id="IPR047859">
    <property type="entry name" value="Ribosomal_bL17_CS"/>
</dbReference>
<dbReference type="InterPro" id="IPR036373">
    <property type="entry name" value="Ribosomal_bL17_sf"/>
</dbReference>
<dbReference type="NCBIfam" id="TIGR00059">
    <property type="entry name" value="L17"/>
    <property type="match status" value="1"/>
</dbReference>
<dbReference type="PANTHER" id="PTHR14413:SF16">
    <property type="entry name" value="LARGE RIBOSOMAL SUBUNIT PROTEIN BL17M"/>
    <property type="match status" value="1"/>
</dbReference>
<dbReference type="PANTHER" id="PTHR14413">
    <property type="entry name" value="RIBOSOMAL PROTEIN L17"/>
    <property type="match status" value="1"/>
</dbReference>
<dbReference type="Pfam" id="PF01196">
    <property type="entry name" value="Ribosomal_L17"/>
    <property type="match status" value="1"/>
</dbReference>
<dbReference type="SUPFAM" id="SSF64263">
    <property type="entry name" value="Prokaryotic ribosomal protein L17"/>
    <property type="match status" value="1"/>
</dbReference>
<dbReference type="PROSITE" id="PS01167">
    <property type="entry name" value="RIBOSOMAL_L17"/>
    <property type="match status" value="1"/>
</dbReference>
<protein>
    <recommendedName>
        <fullName evidence="1">Large ribosomal subunit protein bL17</fullName>
    </recommendedName>
    <alternativeName>
        <fullName evidence="2">50S ribosomal protein L17</fullName>
    </alternativeName>
</protein>
<accession>Q3J5P7</accession>
<organism>
    <name type="scientific">Cereibacter sphaeroides (strain ATCC 17023 / DSM 158 / JCM 6121 / CCUG 31486 / LMG 2827 / NBRC 12203 / NCIMB 8253 / ATH 2.4.1.)</name>
    <name type="common">Rhodobacter sphaeroides</name>
    <dbReference type="NCBI Taxonomy" id="272943"/>
    <lineage>
        <taxon>Bacteria</taxon>
        <taxon>Pseudomonadati</taxon>
        <taxon>Pseudomonadota</taxon>
        <taxon>Alphaproteobacteria</taxon>
        <taxon>Rhodobacterales</taxon>
        <taxon>Paracoccaceae</taxon>
        <taxon>Cereibacter</taxon>
    </lineage>
</organism>